<gene>
    <name type="primary">pyr-7</name>
    <name type="synonym">ura7</name>
    <name type="ORF">NCU00261</name>
</gene>
<organism>
    <name type="scientific">Neurospora crassa (strain ATCC 24698 / 74-OR23-1A / CBS 708.71 / DSM 1257 / FGSC 987)</name>
    <dbReference type="NCBI Taxonomy" id="367110"/>
    <lineage>
        <taxon>Eukaryota</taxon>
        <taxon>Fungi</taxon>
        <taxon>Dikarya</taxon>
        <taxon>Ascomycota</taxon>
        <taxon>Pezizomycotina</taxon>
        <taxon>Sordariomycetes</taxon>
        <taxon>Sordariomycetidae</taxon>
        <taxon>Sordariales</taxon>
        <taxon>Sordariaceae</taxon>
        <taxon>Neurospora</taxon>
    </lineage>
</organism>
<comment type="function">
    <text>Catalyzes the ATP-dependent amination of UTP to CTP with either L-glutamine or ammonia as the source of nitrogen.</text>
</comment>
<comment type="catalytic activity">
    <reaction>
        <text>UTP + L-glutamine + ATP + H2O = CTP + L-glutamate + ADP + phosphate + 2 H(+)</text>
        <dbReference type="Rhea" id="RHEA:26426"/>
        <dbReference type="ChEBI" id="CHEBI:15377"/>
        <dbReference type="ChEBI" id="CHEBI:15378"/>
        <dbReference type="ChEBI" id="CHEBI:29985"/>
        <dbReference type="ChEBI" id="CHEBI:30616"/>
        <dbReference type="ChEBI" id="CHEBI:37563"/>
        <dbReference type="ChEBI" id="CHEBI:43474"/>
        <dbReference type="ChEBI" id="CHEBI:46398"/>
        <dbReference type="ChEBI" id="CHEBI:58359"/>
        <dbReference type="ChEBI" id="CHEBI:456216"/>
        <dbReference type="EC" id="6.3.4.2"/>
    </reaction>
</comment>
<comment type="pathway">
    <text>Pyrimidine metabolism; CTP biosynthesis via de novo pathway; CTP from UDP: step 2/2.</text>
</comment>
<comment type="similarity">
    <text evidence="2">Belongs to the CTP synthase family.</text>
</comment>
<comment type="sequence caution" evidence="2">
    <conflict type="erroneous initiation">
        <sequence resource="EMBL-CDS" id="EAA28496"/>
    </conflict>
    <text>Extended N-terminus.</text>
</comment>
<proteinExistence type="inferred from homology"/>
<name>PYRG_NEUCR</name>
<reference key="1">
    <citation type="journal article" date="2003" name="Nature">
        <title>The genome sequence of the filamentous fungus Neurospora crassa.</title>
        <authorList>
            <person name="Galagan J.E."/>
            <person name="Calvo S.E."/>
            <person name="Borkovich K.A."/>
            <person name="Selker E.U."/>
            <person name="Read N.D."/>
            <person name="Jaffe D.B."/>
            <person name="FitzHugh W."/>
            <person name="Ma L.-J."/>
            <person name="Smirnov S."/>
            <person name="Purcell S."/>
            <person name="Rehman B."/>
            <person name="Elkins T."/>
            <person name="Engels R."/>
            <person name="Wang S."/>
            <person name="Nielsen C.B."/>
            <person name="Butler J."/>
            <person name="Endrizzi M."/>
            <person name="Qui D."/>
            <person name="Ianakiev P."/>
            <person name="Bell-Pedersen D."/>
            <person name="Nelson M.A."/>
            <person name="Werner-Washburne M."/>
            <person name="Selitrennikoff C.P."/>
            <person name="Kinsey J.A."/>
            <person name="Braun E.L."/>
            <person name="Zelter A."/>
            <person name="Schulte U."/>
            <person name="Kothe G.O."/>
            <person name="Jedd G."/>
            <person name="Mewes H.-W."/>
            <person name="Staben C."/>
            <person name="Marcotte E."/>
            <person name="Greenberg D."/>
            <person name="Roy A."/>
            <person name="Foley K."/>
            <person name="Naylor J."/>
            <person name="Stange-Thomann N."/>
            <person name="Barrett R."/>
            <person name="Gnerre S."/>
            <person name="Kamal M."/>
            <person name="Kamvysselis M."/>
            <person name="Mauceli E.W."/>
            <person name="Bielke C."/>
            <person name="Rudd S."/>
            <person name="Frishman D."/>
            <person name="Krystofova S."/>
            <person name="Rasmussen C."/>
            <person name="Metzenberg R.L."/>
            <person name="Perkins D.D."/>
            <person name="Kroken S."/>
            <person name="Cogoni C."/>
            <person name="Macino G."/>
            <person name="Catcheside D.E.A."/>
            <person name="Li W."/>
            <person name="Pratt R.J."/>
            <person name="Osmani S.A."/>
            <person name="DeSouza C.P.C."/>
            <person name="Glass N.L."/>
            <person name="Orbach M.J."/>
            <person name="Berglund J.A."/>
            <person name="Voelker R."/>
            <person name="Yarden O."/>
            <person name="Plamann M."/>
            <person name="Seiler S."/>
            <person name="Dunlap J.C."/>
            <person name="Radford A."/>
            <person name="Aramayo R."/>
            <person name="Natvig D.O."/>
            <person name="Alex L.A."/>
            <person name="Mannhaupt G."/>
            <person name="Ebbole D.J."/>
            <person name="Freitag M."/>
            <person name="Paulsen I."/>
            <person name="Sachs M.S."/>
            <person name="Lander E.S."/>
            <person name="Nusbaum C."/>
            <person name="Birren B.W."/>
        </authorList>
    </citation>
    <scope>NUCLEOTIDE SEQUENCE [LARGE SCALE GENOMIC DNA]</scope>
    <source>
        <strain>ATCC 24698 / 74-OR23-1A / CBS 708.71 / DSM 1257 / FGSC 987</strain>
    </source>
</reference>
<evidence type="ECO:0000255" key="1">
    <source>
        <dbReference type="PROSITE-ProRule" id="PRU00605"/>
    </source>
</evidence>
<evidence type="ECO:0000305" key="2"/>
<keyword id="KW-0067">ATP-binding</keyword>
<keyword id="KW-0315">Glutamine amidotransferase</keyword>
<keyword id="KW-0436">Ligase</keyword>
<keyword id="KW-0547">Nucleotide-binding</keyword>
<keyword id="KW-0665">Pyrimidine biosynthesis</keyword>
<keyword id="KW-1185">Reference proteome</keyword>
<protein>
    <recommendedName>
        <fullName>CTP synthase</fullName>
        <ecNumber>6.3.4.2</ecNumber>
    </recommendedName>
    <alternativeName>
        <fullName>CTP synthetase</fullName>
    </alternativeName>
    <alternativeName>
        <fullName>UTP--ammonia ligase</fullName>
    </alternativeName>
</protein>
<feature type="chain" id="PRO_0000138281" description="CTP synthase">
    <location>
        <begin position="1"/>
        <end position="579"/>
    </location>
</feature>
<feature type="domain" description="Glutamine amidotransferase type-1" evidence="1">
    <location>
        <begin position="310"/>
        <end position="558"/>
    </location>
</feature>
<feature type="active site" description="For GATase activity" evidence="1">
    <location>
        <position position="402"/>
    </location>
</feature>
<feature type="active site" description="For GATase activity" evidence="1">
    <location>
        <position position="531"/>
    </location>
</feature>
<feature type="active site" description="For GATase activity" evidence="1">
    <location>
        <position position="533"/>
    </location>
</feature>
<dbReference type="EC" id="6.3.4.2"/>
<dbReference type="EMBL" id="CM002238">
    <property type="protein sequence ID" value="EAA28496.2"/>
    <property type="status" value="ALT_INIT"/>
    <property type="molecule type" value="Genomic_DNA"/>
</dbReference>
<dbReference type="RefSeq" id="XP_957732.2">
    <property type="nucleotide sequence ID" value="XM_952639.2"/>
</dbReference>
<dbReference type="SMR" id="Q7RZV2"/>
<dbReference type="FunCoup" id="Q7RZV2">
    <property type="interactions" value="874"/>
</dbReference>
<dbReference type="STRING" id="367110.Q7RZV2"/>
<dbReference type="PaxDb" id="5141-EFNCRP00000000004"/>
<dbReference type="EnsemblFungi" id="EAA28496">
    <property type="protein sequence ID" value="EAA28496"/>
    <property type="gene ID" value="NCU00261"/>
</dbReference>
<dbReference type="GeneID" id="3873894"/>
<dbReference type="KEGG" id="ncr:NCU00261"/>
<dbReference type="HOGENOM" id="CLU_011675_5_0_1"/>
<dbReference type="InParanoid" id="Q7RZV2"/>
<dbReference type="OrthoDB" id="1739076at2759"/>
<dbReference type="UniPathway" id="UPA00159">
    <property type="reaction ID" value="UER00277"/>
</dbReference>
<dbReference type="Proteomes" id="UP000001805">
    <property type="component" value="Chromosome 3, Linkage Group III"/>
</dbReference>
<dbReference type="GO" id="GO:0097268">
    <property type="term" value="C:cytoophidium"/>
    <property type="evidence" value="ECO:0000318"/>
    <property type="project" value="GO_Central"/>
</dbReference>
<dbReference type="GO" id="GO:0005737">
    <property type="term" value="C:cytoplasm"/>
    <property type="evidence" value="ECO:0000318"/>
    <property type="project" value="GO_Central"/>
</dbReference>
<dbReference type="GO" id="GO:0005524">
    <property type="term" value="F:ATP binding"/>
    <property type="evidence" value="ECO:0007669"/>
    <property type="project" value="UniProtKB-KW"/>
</dbReference>
<dbReference type="GO" id="GO:0003883">
    <property type="term" value="F:CTP synthase activity"/>
    <property type="evidence" value="ECO:0000318"/>
    <property type="project" value="GO_Central"/>
</dbReference>
<dbReference type="GO" id="GO:0042802">
    <property type="term" value="F:identical protein binding"/>
    <property type="evidence" value="ECO:0000318"/>
    <property type="project" value="GO_Central"/>
</dbReference>
<dbReference type="GO" id="GO:0044210">
    <property type="term" value="P:'de novo' CTP biosynthetic process"/>
    <property type="evidence" value="ECO:0007669"/>
    <property type="project" value="UniProtKB-UniPathway"/>
</dbReference>
<dbReference type="GO" id="GO:0006241">
    <property type="term" value="P:CTP biosynthetic process"/>
    <property type="evidence" value="ECO:0000318"/>
    <property type="project" value="GO_Central"/>
</dbReference>
<dbReference type="GO" id="GO:0019856">
    <property type="term" value="P:pyrimidine nucleobase biosynthetic process"/>
    <property type="evidence" value="ECO:0000318"/>
    <property type="project" value="GO_Central"/>
</dbReference>
<dbReference type="CDD" id="cd03113">
    <property type="entry name" value="CTPS_N"/>
    <property type="match status" value="1"/>
</dbReference>
<dbReference type="CDD" id="cd01746">
    <property type="entry name" value="GATase1_CTP_Synthase"/>
    <property type="match status" value="1"/>
</dbReference>
<dbReference type="FunFam" id="3.40.50.300:FF:000207">
    <property type="entry name" value="CTP synthase"/>
    <property type="match status" value="1"/>
</dbReference>
<dbReference type="FunFam" id="3.40.50.880:FF:000005">
    <property type="entry name" value="CTP synthase"/>
    <property type="match status" value="1"/>
</dbReference>
<dbReference type="Gene3D" id="3.40.50.880">
    <property type="match status" value="1"/>
</dbReference>
<dbReference type="Gene3D" id="3.40.50.300">
    <property type="entry name" value="P-loop containing nucleotide triphosphate hydrolases"/>
    <property type="match status" value="1"/>
</dbReference>
<dbReference type="InterPro" id="IPR029062">
    <property type="entry name" value="Class_I_gatase-like"/>
</dbReference>
<dbReference type="InterPro" id="IPR004468">
    <property type="entry name" value="CTP_synthase"/>
</dbReference>
<dbReference type="InterPro" id="IPR017456">
    <property type="entry name" value="CTP_synthase_N"/>
</dbReference>
<dbReference type="InterPro" id="IPR017926">
    <property type="entry name" value="GATASE"/>
</dbReference>
<dbReference type="InterPro" id="IPR033828">
    <property type="entry name" value="GATase1_CTP_Synthase"/>
</dbReference>
<dbReference type="InterPro" id="IPR027417">
    <property type="entry name" value="P-loop_NTPase"/>
</dbReference>
<dbReference type="NCBIfam" id="NF003792">
    <property type="entry name" value="PRK05380.1"/>
    <property type="match status" value="1"/>
</dbReference>
<dbReference type="NCBIfam" id="TIGR00337">
    <property type="entry name" value="PyrG"/>
    <property type="match status" value="1"/>
</dbReference>
<dbReference type="PANTHER" id="PTHR11550">
    <property type="entry name" value="CTP SYNTHASE"/>
    <property type="match status" value="1"/>
</dbReference>
<dbReference type="PANTHER" id="PTHR11550:SF0">
    <property type="entry name" value="CTP SYNTHASE-RELATED"/>
    <property type="match status" value="1"/>
</dbReference>
<dbReference type="Pfam" id="PF06418">
    <property type="entry name" value="CTP_synth_N"/>
    <property type="match status" value="1"/>
</dbReference>
<dbReference type="Pfam" id="PF00117">
    <property type="entry name" value="GATase"/>
    <property type="match status" value="1"/>
</dbReference>
<dbReference type="SUPFAM" id="SSF52317">
    <property type="entry name" value="Class I glutamine amidotransferase-like"/>
    <property type="match status" value="1"/>
</dbReference>
<dbReference type="SUPFAM" id="SSF52540">
    <property type="entry name" value="P-loop containing nucleoside triphosphate hydrolases"/>
    <property type="match status" value="1"/>
</dbReference>
<dbReference type="PROSITE" id="PS51273">
    <property type="entry name" value="GATASE_TYPE_1"/>
    <property type="match status" value="1"/>
</dbReference>
<accession>Q7RZV2</accession>
<sequence>MKFVLVSGGVVSGVGKGIIASSCGLLLKTLGLKVTAIKIDPYINVDAGTMNPKEHGECFVLHDGGETDLDLGNYERYLGVDLARDNNITTGKVYQQVIENERKGKYLGRTVQVVPHVIDAIIDTINRVSRVPVDKSGEEPDVCIIELGGTVGDIESMPFVEALTQLRHRAGKNNFINIHVSYVPVVNGEQKTKPTQHAVKSVRSAGLIPDLIACRCEKPLEQGTINKVASSCQVEVNQVLAVRDMPTIYQVPLLLEEQGLLRELKETLKLDDVKLSPARVSQGQEVWAKWQKIVPLGYAETVDIVLVGKYVELHDAYLSVIKALEHSAMRCGRKLNLIWVDSEHLEEKTQKEDPTKYHKAWHDVCVAKGILVPGGFGHRGTEGMIRAAQWAREQKTPFLGVCLGMQVAVIEAARNLCELKDATSEEFDANAEHRVIIFMPEGSKEKLGGTMRLGTRSTHFQPGSEFSKLRALYGEATTIEERHRHRYEVNPDYIEKLEQSGLIFIGKDDSGERMEVVEIKDHPYYVGVQYHPEYTSRVLDPSRPFLGFVAAAIGCLDQITKEILQDAGFANGSINGAHF</sequence>